<keyword id="KW-0963">Cytoplasm</keyword>
<keyword id="KW-0227">DNA damage</keyword>
<keyword id="KW-0234">DNA repair</keyword>
<keyword id="KW-0378">Hydrolase</keyword>
<sequence length="250" mass="26910">MPNDNRLAPAALAAQAAALPAAWRHVLEQPAVARAFASVLGHVEQRLAEGAVVYPATPFRALDQLAPADVRVVILGQDPYHGPGQAQGLAFSVPDDCKCPPSLRNIFNEIAVDYPRPTRHDLSAWTRQGVLLLNTSLTVEDGQPGSHAKRGWETVTDALIAEVARDPSPKVFLLWGAHAQAKQALVPADAGHLVLAANHPSPLSARRPPVPFVGCGHFRQTNAWLQQRGQKPVDWSGEQNNASRQGKFAL</sequence>
<comment type="function">
    <text evidence="1">Excises uracil residues from the DNA which can arise as a result of misincorporation of dUMP residues by DNA polymerase or due to deamination of cytosine.</text>
</comment>
<comment type="catalytic activity">
    <reaction evidence="1">
        <text>Hydrolyzes single-stranded DNA or mismatched double-stranded DNA and polynucleotides, releasing free uracil.</text>
        <dbReference type="EC" id="3.2.2.27"/>
    </reaction>
</comment>
<comment type="subcellular location">
    <subcellularLocation>
        <location evidence="1">Cytoplasm</location>
    </subcellularLocation>
</comment>
<comment type="similarity">
    <text evidence="1">Belongs to the uracil-DNA glycosylase (UDG) superfamily. UNG family.</text>
</comment>
<protein>
    <recommendedName>
        <fullName evidence="1">Uracil-DNA glycosylase</fullName>
        <shortName evidence="1">UDG</shortName>
        <ecNumber evidence="1">3.2.2.27</ecNumber>
    </recommendedName>
</protein>
<organism>
    <name type="scientific">Bordetella bronchiseptica (strain ATCC BAA-588 / NCTC 13252 / RB50)</name>
    <name type="common">Alcaligenes bronchisepticus</name>
    <dbReference type="NCBI Taxonomy" id="257310"/>
    <lineage>
        <taxon>Bacteria</taxon>
        <taxon>Pseudomonadati</taxon>
        <taxon>Pseudomonadota</taxon>
        <taxon>Betaproteobacteria</taxon>
        <taxon>Burkholderiales</taxon>
        <taxon>Alcaligenaceae</taxon>
        <taxon>Bordetella</taxon>
    </lineage>
</organism>
<gene>
    <name evidence="1" type="primary">ung</name>
    <name type="ordered locus">BB0210</name>
</gene>
<proteinExistence type="inferred from homology"/>
<reference key="1">
    <citation type="journal article" date="2003" name="Nat. Genet.">
        <title>Comparative analysis of the genome sequences of Bordetella pertussis, Bordetella parapertussis and Bordetella bronchiseptica.</title>
        <authorList>
            <person name="Parkhill J."/>
            <person name="Sebaihia M."/>
            <person name="Preston A."/>
            <person name="Murphy L.D."/>
            <person name="Thomson N.R."/>
            <person name="Harris D.E."/>
            <person name="Holden M.T.G."/>
            <person name="Churcher C.M."/>
            <person name="Bentley S.D."/>
            <person name="Mungall K.L."/>
            <person name="Cerdeno-Tarraga A.-M."/>
            <person name="Temple L."/>
            <person name="James K.D."/>
            <person name="Harris B."/>
            <person name="Quail M.A."/>
            <person name="Achtman M."/>
            <person name="Atkin R."/>
            <person name="Baker S."/>
            <person name="Basham D."/>
            <person name="Bason N."/>
            <person name="Cherevach I."/>
            <person name="Chillingworth T."/>
            <person name="Collins M."/>
            <person name="Cronin A."/>
            <person name="Davis P."/>
            <person name="Doggett J."/>
            <person name="Feltwell T."/>
            <person name="Goble A."/>
            <person name="Hamlin N."/>
            <person name="Hauser H."/>
            <person name="Holroyd S."/>
            <person name="Jagels K."/>
            <person name="Leather S."/>
            <person name="Moule S."/>
            <person name="Norberczak H."/>
            <person name="O'Neil S."/>
            <person name="Ormond D."/>
            <person name="Price C."/>
            <person name="Rabbinowitsch E."/>
            <person name="Rutter S."/>
            <person name="Sanders M."/>
            <person name="Saunders D."/>
            <person name="Seeger K."/>
            <person name="Sharp S."/>
            <person name="Simmonds M."/>
            <person name="Skelton J."/>
            <person name="Squares R."/>
            <person name="Squares S."/>
            <person name="Stevens K."/>
            <person name="Unwin L."/>
            <person name="Whitehead S."/>
            <person name="Barrell B.G."/>
            <person name="Maskell D.J."/>
        </authorList>
    </citation>
    <scope>NUCLEOTIDE SEQUENCE [LARGE SCALE GENOMIC DNA]</scope>
    <source>
        <strain>ATCC BAA-588 / NCTC 13252 / RB50</strain>
    </source>
</reference>
<feature type="chain" id="PRO_0000176070" description="Uracil-DNA glycosylase">
    <location>
        <begin position="1"/>
        <end position="250"/>
    </location>
</feature>
<feature type="region of interest" description="Disordered" evidence="2">
    <location>
        <begin position="228"/>
        <end position="250"/>
    </location>
</feature>
<feature type="active site" description="Proton acceptor" evidence="1">
    <location>
        <position position="78"/>
    </location>
</feature>
<name>UNG_BORBR</name>
<evidence type="ECO:0000255" key="1">
    <source>
        <dbReference type="HAMAP-Rule" id="MF_00148"/>
    </source>
</evidence>
<evidence type="ECO:0000256" key="2">
    <source>
        <dbReference type="SAM" id="MobiDB-lite"/>
    </source>
</evidence>
<accession>Q7WQW5</accession>
<dbReference type="EC" id="3.2.2.27" evidence="1"/>
<dbReference type="EMBL" id="BX640437">
    <property type="protein sequence ID" value="CAE30708.1"/>
    <property type="molecule type" value="Genomic_DNA"/>
</dbReference>
<dbReference type="RefSeq" id="WP_010925734.1">
    <property type="nucleotide sequence ID" value="NC_002927.3"/>
</dbReference>
<dbReference type="SMR" id="Q7WQW5"/>
<dbReference type="KEGG" id="bbr:BB0210"/>
<dbReference type="eggNOG" id="COG0692">
    <property type="taxonomic scope" value="Bacteria"/>
</dbReference>
<dbReference type="HOGENOM" id="CLU_032162_3_0_4"/>
<dbReference type="PHI-base" id="PHI:8067"/>
<dbReference type="Proteomes" id="UP000001027">
    <property type="component" value="Chromosome"/>
</dbReference>
<dbReference type="GO" id="GO:0005737">
    <property type="term" value="C:cytoplasm"/>
    <property type="evidence" value="ECO:0007669"/>
    <property type="project" value="UniProtKB-SubCell"/>
</dbReference>
<dbReference type="GO" id="GO:0004844">
    <property type="term" value="F:uracil DNA N-glycosylase activity"/>
    <property type="evidence" value="ECO:0007669"/>
    <property type="project" value="UniProtKB-UniRule"/>
</dbReference>
<dbReference type="GO" id="GO:0097510">
    <property type="term" value="P:base-excision repair, AP site formation via deaminated base removal"/>
    <property type="evidence" value="ECO:0007669"/>
    <property type="project" value="TreeGrafter"/>
</dbReference>
<dbReference type="CDD" id="cd10027">
    <property type="entry name" value="UDG-F1-like"/>
    <property type="match status" value="1"/>
</dbReference>
<dbReference type="Gene3D" id="3.40.470.10">
    <property type="entry name" value="Uracil-DNA glycosylase-like domain"/>
    <property type="match status" value="1"/>
</dbReference>
<dbReference type="HAMAP" id="MF_00148">
    <property type="entry name" value="UDG"/>
    <property type="match status" value="1"/>
</dbReference>
<dbReference type="InterPro" id="IPR002043">
    <property type="entry name" value="UDG_fam1"/>
</dbReference>
<dbReference type="InterPro" id="IPR018085">
    <property type="entry name" value="Ura-DNA_Glyclase_AS"/>
</dbReference>
<dbReference type="InterPro" id="IPR005122">
    <property type="entry name" value="Uracil-DNA_glycosylase-like"/>
</dbReference>
<dbReference type="InterPro" id="IPR036895">
    <property type="entry name" value="Uracil-DNA_glycosylase-like_sf"/>
</dbReference>
<dbReference type="NCBIfam" id="NF003588">
    <property type="entry name" value="PRK05254.1-1"/>
    <property type="match status" value="1"/>
</dbReference>
<dbReference type="NCBIfam" id="NF003589">
    <property type="entry name" value="PRK05254.1-2"/>
    <property type="match status" value="1"/>
</dbReference>
<dbReference type="NCBIfam" id="NF003591">
    <property type="entry name" value="PRK05254.1-4"/>
    <property type="match status" value="1"/>
</dbReference>
<dbReference type="NCBIfam" id="NF003592">
    <property type="entry name" value="PRK05254.1-5"/>
    <property type="match status" value="1"/>
</dbReference>
<dbReference type="NCBIfam" id="TIGR00628">
    <property type="entry name" value="ung"/>
    <property type="match status" value="1"/>
</dbReference>
<dbReference type="PANTHER" id="PTHR11264">
    <property type="entry name" value="URACIL-DNA GLYCOSYLASE"/>
    <property type="match status" value="1"/>
</dbReference>
<dbReference type="PANTHER" id="PTHR11264:SF0">
    <property type="entry name" value="URACIL-DNA GLYCOSYLASE"/>
    <property type="match status" value="1"/>
</dbReference>
<dbReference type="Pfam" id="PF03167">
    <property type="entry name" value="UDG"/>
    <property type="match status" value="1"/>
</dbReference>
<dbReference type="SMART" id="SM00986">
    <property type="entry name" value="UDG"/>
    <property type="match status" value="1"/>
</dbReference>
<dbReference type="SMART" id="SM00987">
    <property type="entry name" value="UreE_C"/>
    <property type="match status" value="1"/>
</dbReference>
<dbReference type="SUPFAM" id="SSF52141">
    <property type="entry name" value="Uracil-DNA glycosylase-like"/>
    <property type="match status" value="1"/>
</dbReference>
<dbReference type="PROSITE" id="PS00130">
    <property type="entry name" value="U_DNA_GLYCOSYLASE"/>
    <property type="match status" value="1"/>
</dbReference>